<dbReference type="EMBL" id="EU926072">
    <property type="protein sequence ID" value="ACI41404.1"/>
    <property type="molecule type" value="mRNA"/>
</dbReference>
<dbReference type="EMBL" id="FM864076">
    <property type="protein sequence ID" value="CAS03673.1"/>
    <property type="molecule type" value="mRNA"/>
</dbReference>
<dbReference type="SMR" id="B6DCY8"/>
<dbReference type="ArachnoServer" id="AS001011">
    <property type="toxin name" value="U8-lycotoxin-Ls1h"/>
</dbReference>
<dbReference type="GO" id="GO:0005576">
    <property type="term" value="C:extracellular region"/>
    <property type="evidence" value="ECO:0007669"/>
    <property type="project" value="UniProtKB-SubCell"/>
</dbReference>
<dbReference type="GO" id="GO:0090729">
    <property type="term" value="F:toxin activity"/>
    <property type="evidence" value="ECO:0007669"/>
    <property type="project" value="UniProtKB-KW"/>
</dbReference>
<dbReference type="InterPro" id="IPR019553">
    <property type="entry name" value="Spider_toxin_CSTX_knottin"/>
</dbReference>
<dbReference type="Pfam" id="PF10530">
    <property type="entry name" value="Toxin_35"/>
    <property type="match status" value="1"/>
</dbReference>
<reference key="1">
    <citation type="journal article" date="2010" name="Zoology">
        <title>Transcriptome analysis of the venom glands of the Chinese wolf spider Lycosa singoriensis.</title>
        <authorList>
            <person name="Zhang Y."/>
            <person name="Chen J."/>
            <person name="Tang X."/>
            <person name="Wang F."/>
            <person name="Jiang L."/>
            <person name="Xiong X."/>
            <person name="Wang M."/>
            <person name="Rong M."/>
            <person name="Liu Z."/>
            <person name="Liang S."/>
        </authorList>
    </citation>
    <scope>NUCLEOTIDE SEQUENCE [LARGE SCALE MRNA]</scope>
    <source>
        <tissue>Venom gland</tissue>
    </source>
</reference>
<organism>
    <name type="scientific">Lycosa singoriensis</name>
    <name type="common">Wolf spider</name>
    <name type="synonym">Aranea singoriensis</name>
    <dbReference type="NCBI Taxonomy" id="434756"/>
    <lineage>
        <taxon>Eukaryota</taxon>
        <taxon>Metazoa</taxon>
        <taxon>Ecdysozoa</taxon>
        <taxon>Arthropoda</taxon>
        <taxon>Chelicerata</taxon>
        <taxon>Arachnida</taxon>
        <taxon>Araneae</taxon>
        <taxon>Araneomorphae</taxon>
        <taxon>Entelegynae</taxon>
        <taxon>Lycosoidea</taxon>
        <taxon>Lycosidae</taxon>
        <taxon>Lycosa</taxon>
    </lineage>
</organism>
<protein>
    <recommendedName>
        <fullName>U8-lycotoxin-Ls1h</fullName>
    </recommendedName>
    <alternativeName>
        <fullName>Toxin-like structure LSTX-H17</fullName>
    </alternativeName>
</protein>
<accession>B6DCY8</accession>
<keyword id="KW-1015">Disulfide bond</keyword>
<keyword id="KW-0964">Secreted</keyword>
<keyword id="KW-0732">Signal</keyword>
<keyword id="KW-0800">Toxin</keyword>
<comment type="subcellular location">
    <subcellularLocation>
        <location evidence="1">Secreted</location>
    </subcellularLocation>
</comment>
<comment type="tissue specificity">
    <text>Expressed by the venom gland.</text>
</comment>
<comment type="PTM">
    <text evidence="1">Contains 4 disulfide bonds.</text>
</comment>
<comment type="similarity">
    <text evidence="3">Belongs to the neurotoxin 19 (CSTX) family. 08 (U8-Lctx) subfamily.</text>
</comment>
<proteinExistence type="evidence at transcript level"/>
<name>TX817_LYCSI</name>
<sequence length="77" mass="8642">MKLIIFTGLVLFAIVSLIEVQADNERACLPQYQVCTDAPGNCCSNLVCDCYGRYKSGARRGRNCFCLQKGVIYKREN</sequence>
<evidence type="ECO:0000250" key="1"/>
<evidence type="ECO:0000255" key="2"/>
<evidence type="ECO:0000305" key="3"/>
<feature type="signal peptide" evidence="2">
    <location>
        <begin position="1"/>
        <end position="20"/>
    </location>
</feature>
<feature type="propeptide" id="PRO_0000401795" evidence="1">
    <location>
        <begin position="21"/>
        <end position="26"/>
    </location>
</feature>
<feature type="chain" id="PRO_0000401796" description="U8-lycotoxin-Ls1h">
    <location>
        <begin position="27"/>
        <end position="77"/>
    </location>
</feature>